<dbReference type="EC" id="1.97.1.4"/>
<dbReference type="EMBL" id="BA000017">
    <property type="protein sequence ID" value="BAB56389.1"/>
    <property type="molecule type" value="Genomic_DNA"/>
</dbReference>
<dbReference type="RefSeq" id="WP_000911657.1">
    <property type="nucleotide sequence ID" value="NC_002758.2"/>
</dbReference>
<dbReference type="SMR" id="Q99WZ6"/>
<dbReference type="KEGG" id="sav:SAV0227"/>
<dbReference type="HOGENOM" id="CLU_058969_1_1_9"/>
<dbReference type="PhylomeDB" id="Q99WZ6"/>
<dbReference type="Proteomes" id="UP000002481">
    <property type="component" value="Chromosome"/>
</dbReference>
<dbReference type="GO" id="GO:0005737">
    <property type="term" value="C:cytoplasm"/>
    <property type="evidence" value="ECO:0007669"/>
    <property type="project" value="UniProtKB-SubCell"/>
</dbReference>
<dbReference type="GO" id="GO:0051539">
    <property type="term" value="F:4 iron, 4 sulfur cluster binding"/>
    <property type="evidence" value="ECO:0007669"/>
    <property type="project" value="UniProtKB-KW"/>
</dbReference>
<dbReference type="GO" id="GO:0043365">
    <property type="term" value="F:[formate-C-acetyltransferase]-activating enzyme activity"/>
    <property type="evidence" value="ECO:0007669"/>
    <property type="project" value="UniProtKB-EC"/>
</dbReference>
<dbReference type="GO" id="GO:0046872">
    <property type="term" value="F:metal ion binding"/>
    <property type="evidence" value="ECO:0007669"/>
    <property type="project" value="UniProtKB-KW"/>
</dbReference>
<dbReference type="GO" id="GO:0006006">
    <property type="term" value="P:glucose metabolic process"/>
    <property type="evidence" value="ECO:0007669"/>
    <property type="project" value="UniProtKB-KW"/>
</dbReference>
<dbReference type="CDD" id="cd01335">
    <property type="entry name" value="Radical_SAM"/>
    <property type="match status" value="1"/>
</dbReference>
<dbReference type="Gene3D" id="3.20.20.70">
    <property type="entry name" value="Aldolase class I"/>
    <property type="match status" value="1"/>
</dbReference>
<dbReference type="InterPro" id="IPR013785">
    <property type="entry name" value="Aldolase_TIM"/>
</dbReference>
<dbReference type="InterPro" id="IPR040074">
    <property type="entry name" value="BssD/PflA/YjjW"/>
</dbReference>
<dbReference type="InterPro" id="IPR034457">
    <property type="entry name" value="Organic_radical-activating"/>
</dbReference>
<dbReference type="InterPro" id="IPR012839">
    <property type="entry name" value="Organic_radical_activase"/>
</dbReference>
<dbReference type="InterPro" id="IPR012838">
    <property type="entry name" value="PFL1_activating"/>
</dbReference>
<dbReference type="InterPro" id="IPR034465">
    <property type="entry name" value="Pyruvate_for-lyase_activase"/>
</dbReference>
<dbReference type="InterPro" id="IPR001989">
    <property type="entry name" value="Radical_activat_CS"/>
</dbReference>
<dbReference type="InterPro" id="IPR007197">
    <property type="entry name" value="rSAM"/>
</dbReference>
<dbReference type="NCBIfam" id="TIGR02493">
    <property type="entry name" value="PFLA"/>
    <property type="match status" value="1"/>
</dbReference>
<dbReference type="PANTHER" id="PTHR30352:SF5">
    <property type="entry name" value="PYRUVATE FORMATE-LYASE 1-ACTIVATING ENZYME"/>
    <property type="match status" value="1"/>
</dbReference>
<dbReference type="PANTHER" id="PTHR30352">
    <property type="entry name" value="PYRUVATE FORMATE-LYASE-ACTIVATING ENZYME"/>
    <property type="match status" value="1"/>
</dbReference>
<dbReference type="Pfam" id="PF13353">
    <property type="entry name" value="Fer4_12"/>
    <property type="match status" value="1"/>
</dbReference>
<dbReference type="Pfam" id="PF04055">
    <property type="entry name" value="Radical_SAM"/>
    <property type="match status" value="1"/>
</dbReference>
<dbReference type="PIRSF" id="PIRSF000371">
    <property type="entry name" value="PFL_act_enz"/>
    <property type="match status" value="1"/>
</dbReference>
<dbReference type="SFLD" id="SFLDG01118">
    <property type="entry name" value="activating_enzymes__group_2"/>
    <property type="match status" value="1"/>
</dbReference>
<dbReference type="SFLD" id="SFLDF00278">
    <property type="entry name" value="pyruvate_formate-lyase_activas"/>
    <property type="match status" value="1"/>
</dbReference>
<dbReference type="SUPFAM" id="SSF102114">
    <property type="entry name" value="Radical SAM enzymes"/>
    <property type="match status" value="1"/>
</dbReference>
<dbReference type="PROSITE" id="PS01087">
    <property type="entry name" value="RADICAL_ACTIVATING"/>
    <property type="match status" value="1"/>
</dbReference>
<dbReference type="PROSITE" id="PS51918">
    <property type="entry name" value="RADICAL_SAM"/>
    <property type="match status" value="1"/>
</dbReference>
<name>PFLA_STAAM</name>
<feature type="chain" id="PRO_0000271712" description="Pyruvate formate-lyase-activating enzyme">
    <location>
        <begin position="1"/>
        <end position="251"/>
    </location>
</feature>
<feature type="domain" description="Radical SAM core" evidence="3">
    <location>
        <begin position="15"/>
        <end position="244"/>
    </location>
</feature>
<feature type="binding site" evidence="2">
    <location>
        <position position="29"/>
    </location>
    <ligand>
        <name>[4Fe-4S] cluster</name>
        <dbReference type="ChEBI" id="CHEBI:49883"/>
        <note>4Fe-4S-S-AdoMet</note>
    </ligand>
</feature>
<feature type="binding site" evidence="2">
    <location>
        <position position="33"/>
    </location>
    <ligand>
        <name>[4Fe-4S] cluster</name>
        <dbReference type="ChEBI" id="CHEBI:49883"/>
        <note>4Fe-4S-S-AdoMet</note>
    </ligand>
</feature>
<feature type="binding site" evidence="2">
    <location>
        <begin position="35"/>
        <end position="37"/>
    </location>
    <ligand>
        <name>S-adenosyl-L-methionine</name>
        <dbReference type="ChEBI" id="CHEBI:59789"/>
    </ligand>
</feature>
<feature type="binding site" evidence="2">
    <location>
        <position position="36"/>
    </location>
    <ligand>
        <name>[4Fe-4S] cluster</name>
        <dbReference type="ChEBI" id="CHEBI:49883"/>
        <note>4Fe-4S-S-AdoMet</note>
    </ligand>
</feature>
<feature type="binding site" evidence="2">
    <location>
        <position position="79"/>
    </location>
    <ligand>
        <name>S-adenosyl-L-methionine</name>
        <dbReference type="ChEBI" id="CHEBI:59789"/>
    </ligand>
</feature>
<feature type="binding site" evidence="2">
    <location>
        <begin position="134"/>
        <end position="136"/>
    </location>
    <ligand>
        <name>S-adenosyl-L-methionine</name>
        <dbReference type="ChEBI" id="CHEBI:59789"/>
    </ligand>
</feature>
<feature type="binding site" evidence="2">
    <location>
        <position position="207"/>
    </location>
    <ligand>
        <name>S-adenosyl-L-methionine</name>
        <dbReference type="ChEBI" id="CHEBI:59789"/>
    </ligand>
</feature>
<protein>
    <recommendedName>
        <fullName>Pyruvate formate-lyase-activating enzyme</fullName>
        <shortName>PFL-activating enzyme</shortName>
        <ecNumber>1.97.1.4</ecNumber>
    </recommendedName>
</protein>
<gene>
    <name type="primary">pflA</name>
    <name type="ordered locus">SAV0227</name>
</gene>
<proteinExistence type="inferred from homology"/>
<accession>Q99WZ6</accession>
<keyword id="KW-0004">4Fe-4S</keyword>
<keyword id="KW-0119">Carbohydrate metabolism</keyword>
<keyword id="KW-0963">Cytoplasm</keyword>
<keyword id="KW-0313">Glucose metabolism</keyword>
<keyword id="KW-0408">Iron</keyword>
<keyword id="KW-0411">Iron-sulfur</keyword>
<keyword id="KW-0479">Metal-binding</keyword>
<keyword id="KW-0560">Oxidoreductase</keyword>
<keyword id="KW-0949">S-adenosyl-L-methionine</keyword>
<organism>
    <name type="scientific">Staphylococcus aureus (strain Mu50 / ATCC 700699)</name>
    <dbReference type="NCBI Taxonomy" id="158878"/>
    <lineage>
        <taxon>Bacteria</taxon>
        <taxon>Bacillati</taxon>
        <taxon>Bacillota</taxon>
        <taxon>Bacilli</taxon>
        <taxon>Bacillales</taxon>
        <taxon>Staphylococcaceae</taxon>
        <taxon>Staphylococcus</taxon>
    </lineage>
</organism>
<sequence length="251" mass="28499">MLKGHLHSVESLGTVDGPGLRYILFTQGCLLRCLYCHNPDTWKISEPSREVTVDEMVNEILPYKPYFDASGGGVTVSGGEPLLQMPFLEKLFAELKENGVHTCLDTSAGCANDTKAFQRHFEELQKHTDLILLDIKHIDNDKHIRLTGKPNTHILNFARKLSDMKQPVWIRHVLVPGYSDDKDDLIKLGEFINSLDNVEKFEILPYHQLGVHKWKTLGIAYELEDVEAPDDEAVKAAYRYVNFKGKIPVEL</sequence>
<evidence type="ECO:0000250" key="1"/>
<evidence type="ECO:0000250" key="2">
    <source>
        <dbReference type="UniProtKB" id="P0A9N4"/>
    </source>
</evidence>
<evidence type="ECO:0000255" key="3">
    <source>
        <dbReference type="PROSITE-ProRule" id="PRU01266"/>
    </source>
</evidence>
<evidence type="ECO:0000305" key="4"/>
<comment type="function">
    <text evidence="1">Activation of pyruvate formate-lyase under anaerobic conditions by generation of an organic free radical, using S-adenosylmethionine and reduced flavodoxin as cosubstrates to produce 5'-deoxy-adenosine.</text>
</comment>
<comment type="catalytic activity">
    <reaction>
        <text>glycyl-[formate C-acetyltransferase] + reduced [flavodoxin] + S-adenosyl-L-methionine = glycin-2-yl radical-[formate C-acetyltransferase] + semiquinone [flavodoxin] + 5'-deoxyadenosine + L-methionine + H(+)</text>
        <dbReference type="Rhea" id="RHEA:19225"/>
        <dbReference type="Rhea" id="RHEA-COMP:10622"/>
        <dbReference type="Rhea" id="RHEA-COMP:12190"/>
        <dbReference type="Rhea" id="RHEA-COMP:12191"/>
        <dbReference type="Rhea" id="RHEA-COMP:14480"/>
        <dbReference type="ChEBI" id="CHEBI:15378"/>
        <dbReference type="ChEBI" id="CHEBI:17319"/>
        <dbReference type="ChEBI" id="CHEBI:29947"/>
        <dbReference type="ChEBI" id="CHEBI:32722"/>
        <dbReference type="ChEBI" id="CHEBI:57618"/>
        <dbReference type="ChEBI" id="CHEBI:57844"/>
        <dbReference type="ChEBI" id="CHEBI:59789"/>
        <dbReference type="ChEBI" id="CHEBI:140311"/>
        <dbReference type="EC" id="1.97.1.4"/>
    </reaction>
</comment>
<comment type="cofactor">
    <cofactor evidence="1">
        <name>[4Fe-4S] cluster</name>
        <dbReference type="ChEBI" id="CHEBI:49883"/>
    </cofactor>
    <text evidence="1">Binds 1 [4Fe-4S] cluster. The cluster is coordinated with 3 cysteines and an exchangeable S-adenosyl-L-methionine.</text>
</comment>
<comment type="subcellular location">
    <subcellularLocation>
        <location evidence="1">Cytoplasm</location>
    </subcellularLocation>
</comment>
<comment type="similarity">
    <text evidence="4">Belongs to the organic radical-activating enzymes family.</text>
</comment>
<reference key="1">
    <citation type="journal article" date="2001" name="Lancet">
        <title>Whole genome sequencing of meticillin-resistant Staphylococcus aureus.</title>
        <authorList>
            <person name="Kuroda M."/>
            <person name="Ohta T."/>
            <person name="Uchiyama I."/>
            <person name="Baba T."/>
            <person name="Yuzawa H."/>
            <person name="Kobayashi I."/>
            <person name="Cui L."/>
            <person name="Oguchi A."/>
            <person name="Aoki K."/>
            <person name="Nagai Y."/>
            <person name="Lian J.-Q."/>
            <person name="Ito T."/>
            <person name="Kanamori M."/>
            <person name="Matsumaru H."/>
            <person name="Maruyama A."/>
            <person name="Murakami H."/>
            <person name="Hosoyama A."/>
            <person name="Mizutani-Ui Y."/>
            <person name="Takahashi N.K."/>
            <person name="Sawano T."/>
            <person name="Inoue R."/>
            <person name="Kaito C."/>
            <person name="Sekimizu K."/>
            <person name="Hirakawa H."/>
            <person name="Kuhara S."/>
            <person name="Goto S."/>
            <person name="Yabuzaki J."/>
            <person name="Kanehisa M."/>
            <person name="Yamashita A."/>
            <person name="Oshima K."/>
            <person name="Furuya K."/>
            <person name="Yoshino C."/>
            <person name="Shiba T."/>
            <person name="Hattori M."/>
            <person name="Ogasawara N."/>
            <person name="Hayashi H."/>
            <person name="Hiramatsu K."/>
        </authorList>
    </citation>
    <scope>NUCLEOTIDE SEQUENCE [LARGE SCALE GENOMIC DNA]</scope>
    <source>
        <strain>Mu50 / ATCC 700699</strain>
    </source>
</reference>